<dbReference type="EMBL" id="AE017262">
    <property type="protein sequence ID" value="AAT05271.1"/>
    <property type="molecule type" value="Genomic_DNA"/>
</dbReference>
<dbReference type="RefSeq" id="WP_003727890.1">
    <property type="nucleotide sequence ID" value="NC_002973.6"/>
</dbReference>
<dbReference type="SMR" id="Q71WP5"/>
<dbReference type="DNASU" id="2797498"/>
<dbReference type="KEGG" id="lmf:LMOf2365_2506"/>
<dbReference type="HOGENOM" id="CLU_079215_4_2_9"/>
<dbReference type="GO" id="GO:0005886">
    <property type="term" value="C:plasma membrane"/>
    <property type="evidence" value="ECO:0007669"/>
    <property type="project" value="UniProtKB-SubCell"/>
</dbReference>
<dbReference type="GO" id="GO:0045259">
    <property type="term" value="C:proton-transporting ATP synthase complex"/>
    <property type="evidence" value="ECO:0007669"/>
    <property type="project" value="UniProtKB-KW"/>
</dbReference>
<dbReference type="GO" id="GO:0046933">
    <property type="term" value="F:proton-transporting ATP synthase activity, rotational mechanism"/>
    <property type="evidence" value="ECO:0007669"/>
    <property type="project" value="UniProtKB-UniRule"/>
</dbReference>
<dbReference type="GO" id="GO:0046961">
    <property type="term" value="F:proton-transporting ATPase activity, rotational mechanism"/>
    <property type="evidence" value="ECO:0007669"/>
    <property type="project" value="TreeGrafter"/>
</dbReference>
<dbReference type="CDD" id="cd06503">
    <property type="entry name" value="ATP-synt_Fo_b"/>
    <property type="match status" value="1"/>
</dbReference>
<dbReference type="Gene3D" id="1.20.5.620">
    <property type="entry name" value="F1F0 ATP synthase subunit B, membrane domain"/>
    <property type="match status" value="1"/>
</dbReference>
<dbReference type="HAMAP" id="MF_01398">
    <property type="entry name" value="ATP_synth_b_bprime"/>
    <property type="match status" value="1"/>
</dbReference>
<dbReference type="InterPro" id="IPR028987">
    <property type="entry name" value="ATP_synth_B-like_membr_sf"/>
</dbReference>
<dbReference type="InterPro" id="IPR002146">
    <property type="entry name" value="ATP_synth_b/b'su_bac/chlpt"/>
</dbReference>
<dbReference type="InterPro" id="IPR005864">
    <property type="entry name" value="ATP_synth_F0_bsu_bac"/>
</dbReference>
<dbReference type="InterPro" id="IPR050059">
    <property type="entry name" value="ATP_synthase_B_chain"/>
</dbReference>
<dbReference type="NCBIfam" id="TIGR01144">
    <property type="entry name" value="ATP_synt_b"/>
    <property type="match status" value="1"/>
</dbReference>
<dbReference type="PANTHER" id="PTHR33445:SF1">
    <property type="entry name" value="ATP SYNTHASE SUBUNIT B"/>
    <property type="match status" value="1"/>
</dbReference>
<dbReference type="PANTHER" id="PTHR33445">
    <property type="entry name" value="ATP SYNTHASE SUBUNIT B', CHLOROPLASTIC"/>
    <property type="match status" value="1"/>
</dbReference>
<dbReference type="Pfam" id="PF00430">
    <property type="entry name" value="ATP-synt_B"/>
    <property type="match status" value="1"/>
</dbReference>
<dbReference type="SUPFAM" id="SSF81573">
    <property type="entry name" value="F1F0 ATP synthase subunit B, membrane domain"/>
    <property type="match status" value="1"/>
</dbReference>
<organism>
    <name type="scientific">Listeria monocytogenes serotype 4b (strain F2365)</name>
    <dbReference type="NCBI Taxonomy" id="265669"/>
    <lineage>
        <taxon>Bacteria</taxon>
        <taxon>Bacillati</taxon>
        <taxon>Bacillota</taxon>
        <taxon>Bacilli</taxon>
        <taxon>Bacillales</taxon>
        <taxon>Listeriaceae</taxon>
        <taxon>Listeria</taxon>
    </lineage>
</organism>
<name>ATPF_LISMF</name>
<evidence type="ECO:0000255" key="1">
    <source>
        <dbReference type="HAMAP-Rule" id="MF_01398"/>
    </source>
</evidence>
<gene>
    <name evidence="1" type="primary">atpF</name>
    <name type="ordered locus">LMOf2365_2506</name>
</gene>
<feature type="chain" id="PRO_0000368568" description="ATP synthase subunit b">
    <location>
        <begin position="1"/>
        <end position="170"/>
    </location>
</feature>
<feature type="transmembrane region" description="Helical" evidence="1">
    <location>
        <begin position="11"/>
        <end position="31"/>
    </location>
</feature>
<accession>Q71WP5</accession>
<reference key="1">
    <citation type="journal article" date="2004" name="Nucleic Acids Res.">
        <title>Whole genome comparisons of serotype 4b and 1/2a strains of the food-borne pathogen Listeria monocytogenes reveal new insights into the core genome components of this species.</title>
        <authorList>
            <person name="Nelson K.E."/>
            <person name="Fouts D.E."/>
            <person name="Mongodin E.F."/>
            <person name="Ravel J."/>
            <person name="DeBoy R.T."/>
            <person name="Kolonay J.F."/>
            <person name="Rasko D.A."/>
            <person name="Angiuoli S.V."/>
            <person name="Gill S.R."/>
            <person name="Paulsen I.T."/>
            <person name="Peterson J.D."/>
            <person name="White O."/>
            <person name="Nelson W.C."/>
            <person name="Nierman W.C."/>
            <person name="Beanan M.J."/>
            <person name="Brinkac L.M."/>
            <person name="Daugherty S.C."/>
            <person name="Dodson R.J."/>
            <person name="Durkin A.S."/>
            <person name="Madupu R."/>
            <person name="Haft D.H."/>
            <person name="Selengut J."/>
            <person name="Van Aken S.E."/>
            <person name="Khouri H.M."/>
            <person name="Fedorova N."/>
            <person name="Forberger H.A."/>
            <person name="Tran B."/>
            <person name="Kathariou S."/>
            <person name="Wonderling L.D."/>
            <person name="Uhlich G.A."/>
            <person name="Bayles D.O."/>
            <person name="Luchansky J.B."/>
            <person name="Fraser C.M."/>
        </authorList>
    </citation>
    <scope>NUCLEOTIDE SEQUENCE [LARGE SCALE GENOMIC DNA]</scope>
    <source>
        <strain>F2365</strain>
    </source>
</reference>
<sequence>MLQPHLVIGSAFTFGDAFFTLFAFAILLVLIRIYAWKPLMGVMKEREEHIGSEIDAAEESRAQAEQLLAEQKSVLQQARVESQTMIENAKQLGEKEREEIVKTARRESERIKEEAKSDIAREKEDAISALREQVGSLSVLIASKVIEKNLDEKEQSNLIQDYIERLGDDK</sequence>
<comment type="function">
    <text evidence="1">F(1)F(0) ATP synthase produces ATP from ADP in the presence of a proton or sodium gradient. F-type ATPases consist of two structural domains, F(1) containing the extramembraneous catalytic core and F(0) containing the membrane proton channel, linked together by a central stalk and a peripheral stalk. During catalysis, ATP synthesis in the catalytic domain of F(1) is coupled via a rotary mechanism of the central stalk subunits to proton translocation.</text>
</comment>
<comment type="function">
    <text evidence="1">Component of the F(0) channel, it forms part of the peripheral stalk, linking F(1) to F(0).</text>
</comment>
<comment type="subunit">
    <text evidence="1">F-type ATPases have 2 components, F(1) - the catalytic core - and F(0) - the membrane proton channel. F(1) has five subunits: alpha(3), beta(3), gamma(1), delta(1), epsilon(1). F(0) has three main subunits: a(1), b(2) and c(10-14). The alpha and beta chains form an alternating ring which encloses part of the gamma chain. F(1) is attached to F(0) by a central stalk formed by the gamma and epsilon chains, while a peripheral stalk is formed by the delta and b chains.</text>
</comment>
<comment type="subcellular location">
    <subcellularLocation>
        <location evidence="1">Cell membrane</location>
        <topology evidence="1">Single-pass membrane protein</topology>
    </subcellularLocation>
</comment>
<comment type="similarity">
    <text evidence="1">Belongs to the ATPase B chain family.</text>
</comment>
<proteinExistence type="inferred from homology"/>
<protein>
    <recommendedName>
        <fullName evidence="1">ATP synthase subunit b</fullName>
    </recommendedName>
    <alternativeName>
        <fullName evidence="1">ATP synthase F(0) sector subunit b</fullName>
    </alternativeName>
    <alternativeName>
        <fullName evidence="1">ATPase subunit I</fullName>
    </alternativeName>
    <alternativeName>
        <fullName evidence="1">F-type ATPase subunit b</fullName>
        <shortName evidence="1">F-ATPase subunit b</shortName>
    </alternativeName>
</protein>
<keyword id="KW-0066">ATP synthesis</keyword>
<keyword id="KW-1003">Cell membrane</keyword>
<keyword id="KW-0138">CF(0)</keyword>
<keyword id="KW-0375">Hydrogen ion transport</keyword>
<keyword id="KW-0406">Ion transport</keyword>
<keyword id="KW-0472">Membrane</keyword>
<keyword id="KW-0812">Transmembrane</keyword>
<keyword id="KW-1133">Transmembrane helix</keyword>
<keyword id="KW-0813">Transport</keyword>